<evidence type="ECO:0000256" key="1">
    <source>
        <dbReference type="SAM" id="MobiDB-lite"/>
    </source>
</evidence>
<evidence type="ECO:0000305" key="2"/>
<comment type="similarity">
    <text evidence="2">Belongs to the adhesin P1 family.</text>
</comment>
<comment type="caution">
    <text evidence="2">Could be the product of a pseudogene.</text>
</comment>
<gene>
    <name type="ordered locus">MPN_132</name>
    <name type="ORF">E07_orf256L</name>
    <name type="ORF">MP022</name>
</gene>
<accession>P75266</accession>
<feature type="chain" id="PRO_0000210708" description="Putative adhesin P1-like protein MPN_132">
    <location>
        <begin position="1"/>
        <end position="256"/>
    </location>
</feature>
<feature type="region of interest" description="Disordered" evidence="1">
    <location>
        <begin position="56"/>
        <end position="115"/>
    </location>
</feature>
<feature type="region of interest" description="Disordered" evidence="1">
    <location>
        <begin position="149"/>
        <end position="235"/>
    </location>
</feature>
<feature type="compositionally biased region" description="Low complexity" evidence="1">
    <location>
        <begin position="56"/>
        <end position="72"/>
    </location>
</feature>
<feature type="compositionally biased region" description="Polar residues" evidence="1">
    <location>
        <begin position="96"/>
        <end position="112"/>
    </location>
</feature>
<feature type="compositionally biased region" description="Low complexity" evidence="1">
    <location>
        <begin position="155"/>
        <end position="179"/>
    </location>
</feature>
<feature type="compositionally biased region" description="Low complexity" evidence="1">
    <location>
        <begin position="211"/>
        <end position="222"/>
    </location>
</feature>
<reference key="1">
    <citation type="journal article" date="1996" name="Nucleic Acids Res.">
        <title>Complete sequence analysis of the genome of the bacterium Mycoplasma pneumoniae.</title>
        <authorList>
            <person name="Himmelreich R."/>
            <person name="Hilbert H."/>
            <person name="Plagens H."/>
            <person name="Pirkl E."/>
            <person name="Li B.-C."/>
            <person name="Herrmann R."/>
        </authorList>
    </citation>
    <scope>NUCLEOTIDE SEQUENCE [LARGE SCALE GENOMIC DNA]</scope>
    <source>
        <strain>ATCC 29342 / M129 / Subtype 1</strain>
    </source>
</reference>
<keyword id="KW-1185">Reference proteome</keyword>
<organism>
    <name type="scientific">Mycoplasma pneumoniae (strain ATCC 29342 / M129 / Subtype 1)</name>
    <name type="common">Mycoplasmoides pneumoniae</name>
    <dbReference type="NCBI Taxonomy" id="272634"/>
    <lineage>
        <taxon>Bacteria</taxon>
        <taxon>Bacillati</taxon>
        <taxon>Mycoplasmatota</taxon>
        <taxon>Mycoplasmoidales</taxon>
        <taxon>Mycoplasmoidaceae</taxon>
        <taxon>Mycoplasmoides</taxon>
    </lineage>
</organism>
<sequence>MGLQLSGLDASDSDQRELIWAKRPWAAFRGSWVNRLGRVESVWDLKGVWADQAHSAVSESQAATSSTTTTATGDTLPEHPNALAYQISSTDKDSYKASTQGSGQTNSQNTSPYLHLIKPKKVTASDKLDDDLKNLLDPNEVRVKLRQSFGTDHSTQPQPQPLKTTTPVFGTNSGNLGSVLSGGGTTQDSSTTNQLSPVQRVSGWLVGQLPSTSDGNTSSTNNLAPNTNTGNEVVGVGDLSKRASIESSRLWIALKP</sequence>
<dbReference type="EMBL" id="U00089">
    <property type="protein sequence ID" value="AAB95670.1"/>
    <property type="molecule type" value="Genomic_DNA"/>
</dbReference>
<dbReference type="PIR" id="S73348">
    <property type="entry name" value="S73348"/>
</dbReference>
<dbReference type="RefSeq" id="NP_109820.1">
    <property type="nucleotide sequence ID" value="NC_000912.1"/>
</dbReference>
<dbReference type="RefSeq" id="WP_010874489.1">
    <property type="nucleotide sequence ID" value="NZ_OU342337.1"/>
</dbReference>
<dbReference type="SMR" id="P75266"/>
<dbReference type="EnsemblBacteria" id="AAB95670">
    <property type="protein sequence ID" value="AAB95670"/>
    <property type="gene ID" value="MPN_132"/>
</dbReference>
<dbReference type="KEGG" id="mpn:MPN_132"/>
<dbReference type="PATRIC" id="fig|272634.6.peg.145"/>
<dbReference type="HOGENOM" id="CLU_1085120_0_0_14"/>
<dbReference type="BioCyc" id="MPNE272634:G1GJ3-223-MONOMER"/>
<dbReference type="Proteomes" id="UP000000808">
    <property type="component" value="Chromosome"/>
</dbReference>
<dbReference type="InterPro" id="IPR004940">
    <property type="entry name" value="Adhesin_P1_C"/>
</dbReference>
<dbReference type="Pfam" id="PF03257">
    <property type="entry name" value="Adhesin_P1_C"/>
    <property type="match status" value="1"/>
</dbReference>
<protein>
    <recommendedName>
        <fullName>Putative adhesin P1-like protein MPN_132</fullName>
    </recommendedName>
</protein>
<proteinExistence type="uncertain"/>
<name>Y132_MYCPN</name>